<sequence length="257" mass="29607">MDRIIEKLESGWWIVSHEQKLWLPYGELPHGLAANFDLVGQRALRIGEWQGEPVWLVLQHRRHDMGSVRQVIDQDAGLFQLAGRGVQLAEFYRSHKFCGYCGHPMHPSKTEWAMLCSHCRERYYPQIAPCIIVAIRREDSILLAQHVRHRNGVHTVLAGFVEVGETLEQAVAREVMEESGIKVKNLRYVTSQPWPFPQSLMTAFMAEYDSGEIVIDPKELLEANWYRYDDLPLLPPPGTVARRLIEDTVAMCRAEYD</sequence>
<protein>
    <recommendedName>
        <fullName evidence="1">NAD-capped RNA hydrolase NudC</fullName>
        <shortName evidence="1">DeNADding enzyme NudC</shortName>
        <ecNumber evidence="1">3.6.1.-</ecNumber>
    </recommendedName>
    <alternativeName>
        <fullName evidence="1">NADH pyrophosphatase</fullName>
        <ecNumber evidence="1">3.6.1.22</ecNumber>
    </alternativeName>
</protein>
<proteinExistence type="inferred from homology"/>
<organism>
    <name type="scientific">Salmonella enteritidis PT4 (strain P125109)</name>
    <dbReference type="NCBI Taxonomy" id="550537"/>
    <lineage>
        <taxon>Bacteria</taxon>
        <taxon>Pseudomonadati</taxon>
        <taxon>Pseudomonadota</taxon>
        <taxon>Gammaproteobacteria</taxon>
        <taxon>Enterobacterales</taxon>
        <taxon>Enterobacteriaceae</taxon>
        <taxon>Salmonella</taxon>
    </lineage>
</organism>
<comment type="function">
    <text evidence="1">mRNA decapping enzyme that specifically removes the nicotinamide adenine dinucleotide (NAD) cap from a subset of mRNAs by hydrolyzing the diphosphate linkage to produce nicotinamide mononucleotide (NMN) and 5' monophosphate mRNA. The NAD-cap is present at the 5'-end of some mRNAs and stabilizes RNA against 5'-processing. Has preference for mRNAs with a 5'-end purine. Catalyzes the hydrolysis of a broad range of dinucleotide pyrophosphates.</text>
</comment>
<comment type="catalytic activity">
    <reaction evidence="1">
        <text>a 5'-end NAD(+)-phospho-ribonucleoside in mRNA + H2O = a 5'-end phospho-adenosine-phospho-ribonucleoside in mRNA + beta-nicotinamide D-ribonucleotide + 2 H(+)</text>
        <dbReference type="Rhea" id="RHEA:60876"/>
        <dbReference type="Rhea" id="RHEA-COMP:15698"/>
        <dbReference type="Rhea" id="RHEA-COMP:15719"/>
        <dbReference type="ChEBI" id="CHEBI:14649"/>
        <dbReference type="ChEBI" id="CHEBI:15377"/>
        <dbReference type="ChEBI" id="CHEBI:15378"/>
        <dbReference type="ChEBI" id="CHEBI:144029"/>
        <dbReference type="ChEBI" id="CHEBI:144051"/>
    </reaction>
    <physiologicalReaction direction="left-to-right" evidence="1">
        <dbReference type="Rhea" id="RHEA:60877"/>
    </physiologicalReaction>
</comment>
<comment type="catalytic activity">
    <reaction evidence="1">
        <text>NAD(+) + H2O = beta-nicotinamide D-ribonucleotide + AMP + 2 H(+)</text>
        <dbReference type="Rhea" id="RHEA:11800"/>
        <dbReference type="ChEBI" id="CHEBI:14649"/>
        <dbReference type="ChEBI" id="CHEBI:15377"/>
        <dbReference type="ChEBI" id="CHEBI:15378"/>
        <dbReference type="ChEBI" id="CHEBI:57540"/>
        <dbReference type="ChEBI" id="CHEBI:456215"/>
        <dbReference type="EC" id="3.6.1.22"/>
    </reaction>
</comment>
<comment type="catalytic activity">
    <reaction evidence="1">
        <text>NADH + H2O = reduced beta-nicotinamide D-ribonucleotide + AMP + 2 H(+)</text>
        <dbReference type="Rhea" id="RHEA:48868"/>
        <dbReference type="ChEBI" id="CHEBI:15377"/>
        <dbReference type="ChEBI" id="CHEBI:15378"/>
        <dbReference type="ChEBI" id="CHEBI:57945"/>
        <dbReference type="ChEBI" id="CHEBI:90832"/>
        <dbReference type="ChEBI" id="CHEBI:456215"/>
        <dbReference type="EC" id="3.6.1.22"/>
    </reaction>
</comment>
<comment type="cofactor">
    <cofactor evidence="1">
        <name>Mg(2+)</name>
        <dbReference type="ChEBI" id="CHEBI:18420"/>
    </cofactor>
    <cofactor evidence="1">
        <name>Mn(2+)</name>
        <dbReference type="ChEBI" id="CHEBI:29035"/>
    </cofactor>
    <text evidence="1">Divalent metal cations. Mg(2+) or Mn(2+).</text>
</comment>
<comment type="cofactor">
    <cofactor evidence="1">
        <name>Zn(2+)</name>
        <dbReference type="ChEBI" id="CHEBI:29105"/>
    </cofactor>
    <text evidence="1">Binds 1 zinc ion per subunit.</text>
</comment>
<comment type="subunit">
    <text evidence="1">Homodimer.</text>
</comment>
<comment type="similarity">
    <text evidence="1">Belongs to the Nudix hydrolase family. NudC subfamily.</text>
</comment>
<reference key="1">
    <citation type="journal article" date="2008" name="Genome Res.">
        <title>Comparative genome analysis of Salmonella enteritidis PT4 and Salmonella gallinarum 287/91 provides insights into evolutionary and host adaptation pathways.</title>
        <authorList>
            <person name="Thomson N.R."/>
            <person name="Clayton D.J."/>
            <person name="Windhorst D."/>
            <person name="Vernikos G."/>
            <person name="Davidson S."/>
            <person name="Churcher C."/>
            <person name="Quail M.A."/>
            <person name="Stevens M."/>
            <person name="Jones M.A."/>
            <person name="Watson M."/>
            <person name="Barron A."/>
            <person name="Layton A."/>
            <person name="Pickard D."/>
            <person name="Kingsley R.A."/>
            <person name="Bignell A."/>
            <person name="Clark L."/>
            <person name="Harris B."/>
            <person name="Ormond D."/>
            <person name="Abdellah Z."/>
            <person name="Brooks K."/>
            <person name="Cherevach I."/>
            <person name="Chillingworth T."/>
            <person name="Woodward J."/>
            <person name="Norberczak H."/>
            <person name="Lord A."/>
            <person name="Arrowsmith C."/>
            <person name="Jagels K."/>
            <person name="Moule S."/>
            <person name="Mungall K."/>
            <person name="Saunders M."/>
            <person name="Whitehead S."/>
            <person name="Chabalgoity J.A."/>
            <person name="Maskell D."/>
            <person name="Humphreys T."/>
            <person name="Roberts M."/>
            <person name="Barrow P.A."/>
            <person name="Dougan G."/>
            <person name="Parkhill J."/>
        </authorList>
    </citation>
    <scope>NUCLEOTIDE SEQUENCE [LARGE SCALE GENOMIC DNA]</scope>
    <source>
        <strain>P125109</strain>
    </source>
</reference>
<dbReference type="EC" id="3.6.1.-" evidence="1"/>
<dbReference type="EC" id="3.6.1.22" evidence="1"/>
<dbReference type="EMBL" id="AM933172">
    <property type="protein sequence ID" value="CAR35521.1"/>
    <property type="molecule type" value="Genomic_DNA"/>
</dbReference>
<dbReference type="RefSeq" id="WP_000373958.1">
    <property type="nucleotide sequence ID" value="NC_011294.1"/>
</dbReference>
<dbReference type="SMR" id="B5QYF1"/>
<dbReference type="KEGG" id="set:SEN3952"/>
<dbReference type="HOGENOM" id="CLU_037162_0_1_6"/>
<dbReference type="Proteomes" id="UP000000613">
    <property type="component" value="Chromosome"/>
</dbReference>
<dbReference type="GO" id="GO:0005829">
    <property type="term" value="C:cytosol"/>
    <property type="evidence" value="ECO:0007669"/>
    <property type="project" value="TreeGrafter"/>
</dbReference>
<dbReference type="GO" id="GO:0000287">
    <property type="term" value="F:magnesium ion binding"/>
    <property type="evidence" value="ECO:0007669"/>
    <property type="project" value="UniProtKB-UniRule"/>
</dbReference>
<dbReference type="GO" id="GO:0030145">
    <property type="term" value="F:manganese ion binding"/>
    <property type="evidence" value="ECO:0007669"/>
    <property type="project" value="UniProtKB-UniRule"/>
</dbReference>
<dbReference type="GO" id="GO:0000210">
    <property type="term" value="F:NAD+ diphosphatase activity"/>
    <property type="evidence" value="ECO:0007669"/>
    <property type="project" value="UniProtKB-UniRule"/>
</dbReference>
<dbReference type="GO" id="GO:0035529">
    <property type="term" value="F:NADH pyrophosphatase activity"/>
    <property type="evidence" value="ECO:0007669"/>
    <property type="project" value="TreeGrafter"/>
</dbReference>
<dbReference type="GO" id="GO:0110153">
    <property type="term" value="F:RNA NAD-cap (NMN-forming) hydrolase activity"/>
    <property type="evidence" value="ECO:0007669"/>
    <property type="project" value="RHEA"/>
</dbReference>
<dbReference type="GO" id="GO:0008270">
    <property type="term" value="F:zinc ion binding"/>
    <property type="evidence" value="ECO:0007669"/>
    <property type="project" value="UniProtKB-UniRule"/>
</dbReference>
<dbReference type="GO" id="GO:0019677">
    <property type="term" value="P:NAD catabolic process"/>
    <property type="evidence" value="ECO:0007669"/>
    <property type="project" value="TreeGrafter"/>
</dbReference>
<dbReference type="GO" id="GO:0006734">
    <property type="term" value="P:NADH metabolic process"/>
    <property type="evidence" value="ECO:0007669"/>
    <property type="project" value="TreeGrafter"/>
</dbReference>
<dbReference type="GO" id="GO:0006742">
    <property type="term" value="P:NADP catabolic process"/>
    <property type="evidence" value="ECO:0007669"/>
    <property type="project" value="TreeGrafter"/>
</dbReference>
<dbReference type="CDD" id="cd03429">
    <property type="entry name" value="NUDIX_NADH_pyrophosphatase_Nudt13"/>
    <property type="match status" value="1"/>
</dbReference>
<dbReference type="FunFam" id="3.90.79.10:FF:000004">
    <property type="entry name" value="NADH pyrophosphatase"/>
    <property type="match status" value="1"/>
</dbReference>
<dbReference type="FunFam" id="3.90.79.20:FF:000001">
    <property type="entry name" value="NADH pyrophosphatase"/>
    <property type="match status" value="1"/>
</dbReference>
<dbReference type="Gene3D" id="3.90.79.20">
    <property type="match status" value="1"/>
</dbReference>
<dbReference type="Gene3D" id="3.90.79.10">
    <property type="entry name" value="Nucleoside Triphosphate Pyrophosphohydrolase"/>
    <property type="match status" value="1"/>
</dbReference>
<dbReference type="HAMAP" id="MF_00297">
    <property type="entry name" value="Nudix_NudC"/>
    <property type="match status" value="1"/>
</dbReference>
<dbReference type="InterPro" id="IPR050241">
    <property type="entry name" value="NAD-cap_RNA_hydrolase_NudC"/>
</dbReference>
<dbReference type="InterPro" id="IPR049734">
    <property type="entry name" value="NudC-like_C"/>
</dbReference>
<dbReference type="InterPro" id="IPR015797">
    <property type="entry name" value="NUDIX_hydrolase-like_dom_sf"/>
</dbReference>
<dbReference type="InterPro" id="IPR020084">
    <property type="entry name" value="NUDIX_hydrolase_CS"/>
</dbReference>
<dbReference type="InterPro" id="IPR000086">
    <property type="entry name" value="NUDIX_hydrolase_dom"/>
</dbReference>
<dbReference type="InterPro" id="IPR022925">
    <property type="entry name" value="RNA_Hydrolase_NudC"/>
</dbReference>
<dbReference type="InterPro" id="IPR015376">
    <property type="entry name" value="Znr_NADH_PPase"/>
</dbReference>
<dbReference type="NCBIfam" id="NF001299">
    <property type="entry name" value="PRK00241.1"/>
    <property type="match status" value="1"/>
</dbReference>
<dbReference type="PANTHER" id="PTHR42904:SF6">
    <property type="entry name" value="NAD-CAPPED RNA HYDROLASE NUDT12"/>
    <property type="match status" value="1"/>
</dbReference>
<dbReference type="PANTHER" id="PTHR42904">
    <property type="entry name" value="NUDIX HYDROLASE, NUDC SUBFAMILY"/>
    <property type="match status" value="1"/>
</dbReference>
<dbReference type="Pfam" id="PF00293">
    <property type="entry name" value="NUDIX"/>
    <property type="match status" value="1"/>
</dbReference>
<dbReference type="Pfam" id="PF09297">
    <property type="entry name" value="Zn_ribbon_NUD"/>
    <property type="match status" value="1"/>
</dbReference>
<dbReference type="SUPFAM" id="SSF55811">
    <property type="entry name" value="Nudix"/>
    <property type="match status" value="2"/>
</dbReference>
<dbReference type="PROSITE" id="PS51462">
    <property type="entry name" value="NUDIX"/>
    <property type="match status" value="1"/>
</dbReference>
<dbReference type="PROSITE" id="PS00893">
    <property type="entry name" value="NUDIX_BOX"/>
    <property type="match status" value="1"/>
</dbReference>
<accession>B5QYF1</accession>
<keyword id="KW-0378">Hydrolase</keyword>
<keyword id="KW-0460">Magnesium</keyword>
<keyword id="KW-0464">Manganese</keyword>
<keyword id="KW-0479">Metal-binding</keyword>
<keyword id="KW-0520">NAD</keyword>
<keyword id="KW-0862">Zinc</keyword>
<feature type="chain" id="PRO_1000115248" description="NAD-capped RNA hydrolase NudC">
    <location>
        <begin position="1"/>
        <end position="257"/>
    </location>
</feature>
<feature type="domain" description="Nudix hydrolase" evidence="1">
    <location>
        <begin position="125"/>
        <end position="248"/>
    </location>
</feature>
<feature type="short sequence motif" description="Nudix box" evidence="1">
    <location>
        <begin position="159"/>
        <end position="180"/>
    </location>
</feature>
<feature type="binding site" evidence="1">
    <location>
        <position position="69"/>
    </location>
    <ligand>
        <name>substrate</name>
    </ligand>
</feature>
<feature type="binding site" evidence="1">
    <location>
        <position position="98"/>
    </location>
    <ligand>
        <name>Zn(2+)</name>
        <dbReference type="ChEBI" id="CHEBI:29105"/>
    </ligand>
</feature>
<feature type="binding site" evidence="1">
    <location>
        <position position="101"/>
    </location>
    <ligand>
        <name>Zn(2+)</name>
        <dbReference type="ChEBI" id="CHEBI:29105"/>
    </ligand>
</feature>
<feature type="binding site" evidence="1">
    <location>
        <position position="111"/>
    </location>
    <ligand>
        <name>substrate</name>
    </ligand>
</feature>
<feature type="binding site" evidence="1">
    <location>
        <position position="116"/>
    </location>
    <ligand>
        <name>Zn(2+)</name>
        <dbReference type="ChEBI" id="CHEBI:29105"/>
    </ligand>
</feature>
<feature type="binding site" evidence="1">
    <location>
        <position position="119"/>
    </location>
    <ligand>
        <name>Zn(2+)</name>
        <dbReference type="ChEBI" id="CHEBI:29105"/>
    </ligand>
</feature>
<feature type="binding site" evidence="1">
    <location>
        <position position="124"/>
    </location>
    <ligand>
        <name>substrate</name>
    </ligand>
</feature>
<feature type="binding site" evidence="1">
    <location>
        <position position="158"/>
    </location>
    <ligand>
        <name>a divalent metal cation</name>
        <dbReference type="ChEBI" id="CHEBI:60240"/>
        <label>1</label>
    </ligand>
</feature>
<feature type="binding site" evidence="1">
    <location>
        <position position="174"/>
    </location>
    <ligand>
        <name>a divalent metal cation</name>
        <dbReference type="ChEBI" id="CHEBI:60240"/>
        <label>2</label>
    </ligand>
</feature>
<feature type="binding site" evidence="1">
    <location>
        <position position="174"/>
    </location>
    <ligand>
        <name>a divalent metal cation</name>
        <dbReference type="ChEBI" id="CHEBI:60240"/>
        <label>3</label>
    </ligand>
</feature>
<feature type="binding site" evidence="1">
    <location>
        <position position="178"/>
    </location>
    <ligand>
        <name>a divalent metal cation</name>
        <dbReference type="ChEBI" id="CHEBI:60240"/>
        <label>1</label>
    </ligand>
</feature>
<feature type="binding site" evidence="1">
    <location>
        <position position="178"/>
    </location>
    <ligand>
        <name>a divalent metal cation</name>
        <dbReference type="ChEBI" id="CHEBI:60240"/>
        <label>3</label>
    </ligand>
</feature>
<feature type="binding site" evidence="1">
    <location>
        <begin position="192"/>
        <end position="199"/>
    </location>
    <ligand>
        <name>substrate</name>
    </ligand>
</feature>
<feature type="binding site" evidence="1">
    <location>
        <position position="219"/>
    </location>
    <ligand>
        <name>a divalent metal cation</name>
        <dbReference type="ChEBI" id="CHEBI:60240"/>
        <label>1</label>
    </ligand>
</feature>
<feature type="binding site" evidence="1">
    <location>
        <position position="219"/>
    </location>
    <ligand>
        <name>a divalent metal cation</name>
        <dbReference type="ChEBI" id="CHEBI:60240"/>
        <label>3</label>
    </ligand>
</feature>
<feature type="binding site" evidence="1">
    <location>
        <position position="241"/>
    </location>
    <ligand>
        <name>substrate</name>
    </ligand>
</feature>
<gene>
    <name evidence="1" type="primary">nudC</name>
    <name type="ordered locus">SEN3952</name>
</gene>
<evidence type="ECO:0000255" key="1">
    <source>
        <dbReference type="HAMAP-Rule" id="MF_00297"/>
    </source>
</evidence>
<name>NUDC_SALEP</name>